<comment type="function">
    <text evidence="1">Catalyzes a trans-dehydration via an enolate intermediate.</text>
</comment>
<comment type="catalytic activity">
    <reaction evidence="1">
        <text>3-dehydroquinate = 3-dehydroshikimate + H2O</text>
        <dbReference type="Rhea" id="RHEA:21096"/>
        <dbReference type="ChEBI" id="CHEBI:15377"/>
        <dbReference type="ChEBI" id="CHEBI:16630"/>
        <dbReference type="ChEBI" id="CHEBI:32364"/>
        <dbReference type="EC" id="4.2.1.10"/>
    </reaction>
</comment>
<comment type="pathway">
    <text evidence="1">Metabolic intermediate biosynthesis; chorismate biosynthesis; chorismate from D-erythrose 4-phosphate and phosphoenolpyruvate: step 3/7.</text>
</comment>
<comment type="subunit">
    <text evidence="1">Homododecamer.</text>
</comment>
<comment type="similarity">
    <text evidence="1">Belongs to the type-II 3-dehydroquinase family.</text>
</comment>
<accession>Q6FBI3</accession>
<reference key="1">
    <citation type="journal article" date="2004" name="Nucleic Acids Res.">
        <title>Unique features revealed by the genome sequence of Acinetobacter sp. ADP1, a versatile and naturally transformation competent bacterium.</title>
        <authorList>
            <person name="Barbe V."/>
            <person name="Vallenet D."/>
            <person name="Fonknechten N."/>
            <person name="Kreimeyer A."/>
            <person name="Oztas S."/>
            <person name="Labarre L."/>
            <person name="Cruveiller S."/>
            <person name="Robert C."/>
            <person name="Duprat S."/>
            <person name="Wincker P."/>
            <person name="Ornston L.N."/>
            <person name="Weissenbach J."/>
            <person name="Marliere P."/>
            <person name="Cohen G.N."/>
            <person name="Medigue C."/>
        </authorList>
    </citation>
    <scope>NUCLEOTIDE SEQUENCE [LARGE SCALE GENOMIC DNA]</scope>
    <source>
        <strain>ATCC 33305 / BD413 / ADP1</strain>
    </source>
</reference>
<proteinExistence type="inferred from homology"/>
<name>AROQ_ACIAD</name>
<evidence type="ECO:0000255" key="1">
    <source>
        <dbReference type="HAMAP-Rule" id="MF_00169"/>
    </source>
</evidence>
<gene>
    <name evidence="1" type="primary">aroQ</name>
    <name type="ordered locus">ACIAD1738</name>
</gene>
<feature type="chain" id="PRO_0000159861" description="3-dehydroquinate dehydratase">
    <location>
        <begin position="1"/>
        <end position="149"/>
    </location>
</feature>
<feature type="active site" description="Proton acceptor" evidence="1">
    <location>
        <position position="24"/>
    </location>
</feature>
<feature type="active site" description="Proton donor" evidence="1">
    <location>
        <position position="102"/>
    </location>
</feature>
<feature type="binding site" evidence="1">
    <location>
        <position position="76"/>
    </location>
    <ligand>
        <name>substrate</name>
    </ligand>
</feature>
<feature type="binding site" evidence="1">
    <location>
        <position position="82"/>
    </location>
    <ligand>
        <name>substrate</name>
    </ligand>
</feature>
<feature type="binding site" evidence="1">
    <location>
        <position position="89"/>
    </location>
    <ligand>
        <name>substrate</name>
    </ligand>
</feature>
<feature type="binding site" evidence="1">
    <location>
        <begin position="103"/>
        <end position="104"/>
    </location>
    <ligand>
        <name>substrate</name>
    </ligand>
</feature>
<feature type="binding site" evidence="1">
    <location>
        <position position="113"/>
    </location>
    <ligand>
        <name>substrate</name>
    </ligand>
</feature>
<feature type="site" description="Transition state stabilizer" evidence="1">
    <location>
        <position position="19"/>
    </location>
</feature>
<sequence length="149" mass="16390">MSSTILVIHGPNLNLLGKREPEVYGYLSLDDINQQLKTQAQASNISLETFQSNWEGAIVDRIHQAQIDGIQFILINPAALTHTSVAVRDALLGVAIPFIEVHLSNVHAREAFRHHSYLSDKAVGVICGFGAKGYHFALDYAIQKIQPST</sequence>
<organism>
    <name type="scientific">Acinetobacter baylyi (strain ATCC 33305 / BD413 / ADP1)</name>
    <dbReference type="NCBI Taxonomy" id="62977"/>
    <lineage>
        <taxon>Bacteria</taxon>
        <taxon>Pseudomonadati</taxon>
        <taxon>Pseudomonadota</taxon>
        <taxon>Gammaproteobacteria</taxon>
        <taxon>Moraxellales</taxon>
        <taxon>Moraxellaceae</taxon>
        <taxon>Acinetobacter</taxon>
    </lineage>
</organism>
<dbReference type="EC" id="4.2.1.10" evidence="1"/>
<dbReference type="EMBL" id="CR543861">
    <property type="protein sequence ID" value="CAG68579.1"/>
    <property type="molecule type" value="Genomic_DNA"/>
</dbReference>
<dbReference type="RefSeq" id="WP_004926732.1">
    <property type="nucleotide sequence ID" value="NC_005966.1"/>
</dbReference>
<dbReference type="SMR" id="Q6FBI3"/>
<dbReference type="STRING" id="202950.GCA_001485005_03115"/>
<dbReference type="GeneID" id="45234124"/>
<dbReference type="KEGG" id="aci:ACIAD1738"/>
<dbReference type="eggNOG" id="COG0757">
    <property type="taxonomic scope" value="Bacteria"/>
</dbReference>
<dbReference type="HOGENOM" id="CLU_090968_1_0_6"/>
<dbReference type="OrthoDB" id="9790793at2"/>
<dbReference type="BioCyc" id="ASP62977:ACIAD_RS08015-MONOMER"/>
<dbReference type="UniPathway" id="UPA00053">
    <property type="reaction ID" value="UER00086"/>
</dbReference>
<dbReference type="Proteomes" id="UP000000430">
    <property type="component" value="Chromosome"/>
</dbReference>
<dbReference type="GO" id="GO:0003855">
    <property type="term" value="F:3-dehydroquinate dehydratase activity"/>
    <property type="evidence" value="ECO:0007669"/>
    <property type="project" value="UniProtKB-UniRule"/>
</dbReference>
<dbReference type="GO" id="GO:0008652">
    <property type="term" value="P:amino acid biosynthetic process"/>
    <property type="evidence" value="ECO:0007669"/>
    <property type="project" value="UniProtKB-KW"/>
</dbReference>
<dbReference type="GO" id="GO:0009073">
    <property type="term" value="P:aromatic amino acid family biosynthetic process"/>
    <property type="evidence" value="ECO:0007669"/>
    <property type="project" value="UniProtKB-KW"/>
</dbReference>
<dbReference type="GO" id="GO:0009423">
    <property type="term" value="P:chorismate biosynthetic process"/>
    <property type="evidence" value="ECO:0007669"/>
    <property type="project" value="UniProtKB-UniRule"/>
</dbReference>
<dbReference type="GO" id="GO:0019631">
    <property type="term" value="P:quinate catabolic process"/>
    <property type="evidence" value="ECO:0007669"/>
    <property type="project" value="TreeGrafter"/>
</dbReference>
<dbReference type="CDD" id="cd00466">
    <property type="entry name" value="DHQase_II"/>
    <property type="match status" value="1"/>
</dbReference>
<dbReference type="Gene3D" id="3.40.50.9100">
    <property type="entry name" value="Dehydroquinase, class II"/>
    <property type="match status" value="1"/>
</dbReference>
<dbReference type="HAMAP" id="MF_00169">
    <property type="entry name" value="AroQ"/>
    <property type="match status" value="1"/>
</dbReference>
<dbReference type="InterPro" id="IPR001874">
    <property type="entry name" value="DHquinase_II"/>
</dbReference>
<dbReference type="InterPro" id="IPR018509">
    <property type="entry name" value="DHquinase_II_CS"/>
</dbReference>
<dbReference type="InterPro" id="IPR036441">
    <property type="entry name" value="DHquinase_II_sf"/>
</dbReference>
<dbReference type="NCBIfam" id="TIGR01088">
    <property type="entry name" value="aroQ"/>
    <property type="match status" value="1"/>
</dbReference>
<dbReference type="NCBIfam" id="NF003804">
    <property type="entry name" value="PRK05395.1-1"/>
    <property type="match status" value="1"/>
</dbReference>
<dbReference type="NCBIfam" id="NF003805">
    <property type="entry name" value="PRK05395.1-2"/>
    <property type="match status" value="1"/>
</dbReference>
<dbReference type="NCBIfam" id="NF003806">
    <property type="entry name" value="PRK05395.1-3"/>
    <property type="match status" value="1"/>
</dbReference>
<dbReference type="NCBIfam" id="NF003807">
    <property type="entry name" value="PRK05395.1-4"/>
    <property type="match status" value="1"/>
</dbReference>
<dbReference type="PANTHER" id="PTHR21272">
    <property type="entry name" value="CATABOLIC 3-DEHYDROQUINASE"/>
    <property type="match status" value="1"/>
</dbReference>
<dbReference type="PANTHER" id="PTHR21272:SF3">
    <property type="entry name" value="CATABOLIC 3-DEHYDROQUINASE"/>
    <property type="match status" value="1"/>
</dbReference>
<dbReference type="Pfam" id="PF01220">
    <property type="entry name" value="DHquinase_II"/>
    <property type="match status" value="1"/>
</dbReference>
<dbReference type="PIRSF" id="PIRSF001399">
    <property type="entry name" value="DHquinase_II"/>
    <property type="match status" value="1"/>
</dbReference>
<dbReference type="SUPFAM" id="SSF52304">
    <property type="entry name" value="Type II 3-dehydroquinate dehydratase"/>
    <property type="match status" value="1"/>
</dbReference>
<dbReference type="PROSITE" id="PS01029">
    <property type="entry name" value="DEHYDROQUINASE_II"/>
    <property type="match status" value="1"/>
</dbReference>
<keyword id="KW-0028">Amino-acid biosynthesis</keyword>
<keyword id="KW-0057">Aromatic amino acid biosynthesis</keyword>
<keyword id="KW-0456">Lyase</keyword>
<protein>
    <recommendedName>
        <fullName evidence="1">3-dehydroquinate dehydratase</fullName>
        <shortName evidence="1">3-dehydroquinase</shortName>
        <ecNumber evidence="1">4.2.1.10</ecNumber>
    </recommendedName>
    <alternativeName>
        <fullName evidence="1">Type II DHQase</fullName>
    </alternativeName>
</protein>